<proteinExistence type="inferred from homology"/>
<gene>
    <name type="primary">NSA2</name>
    <name type="ORF">SCY_1627</name>
</gene>
<feature type="chain" id="PRO_0000320428" description="Ribosome biogenesis protein NSA2">
    <location>
        <begin position="1"/>
        <end position="261"/>
    </location>
</feature>
<feature type="region of interest" description="Disordered" evidence="4">
    <location>
        <begin position="1"/>
        <end position="43"/>
    </location>
</feature>
<feature type="region of interest" description="Disordered" evidence="4">
    <location>
        <begin position="61"/>
        <end position="87"/>
    </location>
</feature>
<feature type="short sequence motif" description="Nuclear localization signal 1" evidence="3">
    <location>
        <begin position="15"/>
        <end position="22"/>
    </location>
</feature>
<feature type="short sequence motif" description="Nuclear localization signal 2" evidence="3">
    <location>
        <begin position="51"/>
        <end position="58"/>
    </location>
</feature>
<feature type="compositionally biased region" description="Basic and acidic residues" evidence="4">
    <location>
        <begin position="1"/>
        <end position="40"/>
    </location>
</feature>
<organism>
    <name type="scientific">Saccharomyces cerevisiae (strain YJM789)</name>
    <name type="common">Baker's yeast</name>
    <dbReference type="NCBI Taxonomy" id="307796"/>
    <lineage>
        <taxon>Eukaryota</taxon>
        <taxon>Fungi</taxon>
        <taxon>Dikarya</taxon>
        <taxon>Ascomycota</taxon>
        <taxon>Saccharomycotina</taxon>
        <taxon>Saccharomycetes</taxon>
        <taxon>Saccharomycetales</taxon>
        <taxon>Saccharomycetaceae</taxon>
        <taxon>Saccharomyces</taxon>
    </lineage>
</organism>
<name>NSA2_YEAS7</name>
<accession>A6ZR80</accession>
<comment type="function">
    <text evidence="1">Involved in the biogenesis of the 60S ribosomal subunit. May play a part in the quality control of pre-60S particles. Under normal, rapid growth conditions, high levels of NSA2 would allow the progression of pre-60S particles through the ITS2 processing (By similarity).</text>
</comment>
<comment type="subunit">
    <text evidence="2">Component of the pre-66S ribosomal particle. Interacts with NOP7 and RRP1. Interacts with RSA4 (via WD repeats).</text>
</comment>
<comment type="subcellular location">
    <subcellularLocation>
        <location evidence="1">Nucleus</location>
        <location evidence="1">Nucleolus</location>
    </subcellularLocation>
</comment>
<comment type="similarity">
    <text evidence="5">Belongs to the eukaryotic ribosomal protein eS8 family. Ribosome biogenesis protein NSA2 subfamily.</text>
</comment>
<sequence length="261" mass="29723">MPQNDYIERHIKQHGKRLDHEERKRKREARESHKISERAQKLTGWKGKQFAKKRYAEKVSMRKKIKAHEQSKVKGSSKPLDTDGDALPTYLLDREQNNTAKAISSSIKQKRLEKADKFSVPLPKVRGISEEEMFKVIKTGKSRSKSWKRMITKHTFVGEGFTRRPVKMERIIRPSALRQKKANVTHPELGVTVFLPILAVKKNPQSPMYTQLGVLTKGTIIEVNVSELGMVTAGGKVVWGKYAQVTNEPDRDGCVNAVLLV</sequence>
<protein>
    <recommendedName>
        <fullName>Ribosome biogenesis protein NSA2</fullName>
    </recommendedName>
    <alternativeName>
        <fullName>NOP7-associated protein 2</fullName>
    </alternativeName>
</protein>
<keyword id="KW-0539">Nucleus</keyword>
<keyword id="KW-0687">Ribonucleoprotein</keyword>
<keyword id="KW-0690">Ribosome biogenesis</keyword>
<keyword id="KW-0698">rRNA processing</keyword>
<dbReference type="EMBL" id="AAFW02000048">
    <property type="protein sequence ID" value="EDN63100.1"/>
    <property type="molecule type" value="Genomic_DNA"/>
</dbReference>
<dbReference type="EMDB" id="EMD-10841"/>
<dbReference type="EMDB" id="EMD-10842"/>
<dbReference type="EMDB" id="EMD-24269"/>
<dbReference type="EMDB" id="EMD-24280"/>
<dbReference type="EMDB" id="EMD-24296"/>
<dbReference type="EMDB" id="EMD-26259"/>
<dbReference type="SMR" id="A6ZR80"/>
<dbReference type="IntAct" id="A6ZR80">
    <property type="interactions" value="1"/>
</dbReference>
<dbReference type="MINT" id="A6ZR80"/>
<dbReference type="HOGENOM" id="CLU_1070048_0_0_1"/>
<dbReference type="Proteomes" id="UP000007060">
    <property type="component" value="Unassembled WGS sequence"/>
</dbReference>
<dbReference type="GO" id="GO:0005730">
    <property type="term" value="C:nucleolus"/>
    <property type="evidence" value="ECO:0007669"/>
    <property type="project" value="UniProtKB-SubCell"/>
</dbReference>
<dbReference type="GO" id="GO:1990904">
    <property type="term" value="C:ribonucleoprotein complex"/>
    <property type="evidence" value="ECO:0007669"/>
    <property type="project" value="UniProtKB-KW"/>
</dbReference>
<dbReference type="GO" id="GO:0006364">
    <property type="term" value="P:rRNA processing"/>
    <property type="evidence" value="ECO:0007669"/>
    <property type="project" value="UniProtKB-KW"/>
</dbReference>
<dbReference type="CDD" id="cd11381">
    <property type="entry name" value="NSA2"/>
    <property type="match status" value="1"/>
</dbReference>
<dbReference type="FunFam" id="2.40.10.310:FF:000001">
    <property type="entry name" value="NSA2, ribosome biogenesis homolog"/>
    <property type="match status" value="1"/>
</dbReference>
<dbReference type="Gene3D" id="2.40.10.310">
    <property type="match status" value="1"/>
</dbReference>
<dbReference type="InterPro" id="IPR039411">
    <property type="entry name" value="NSA2_fam"/>
</dbReference>
<dbReference type="InterPro" id="IPR022309">
    <property type="entry name" value="Ribosomal_Se8/biogenesis_NSA2"/>
</dbReference>
<dbReference type="PANTHER" id="PTHR12642">
    <property type="entry name" value="RIBOSOME BIOGENESIS PROTEIN NSA2 HOMOLOG"/>
    <property type="match status" value="1"/>
</dbReference>
<dbReference type="Pfam" id="PF01201">
    <property type="entry name" value="Ribosomal_S8e"/>
    <property type="match status" value="1"/>
</dbReference>
<evidence type="ECO:0000250" key="1"/>
<evidence type="ECO:0000250" key="2">
    <source>
        <dbReference type="UniProtKB" id="P40078"/>
    </source>
</evidence>
<evidence type="ECO:0000255" key="3">
    <source>
        <dbReference type="PROSITE-ProRule" id="PRU00768"/>
    </source>
</evidence>
<evidence type="ECO:0000256" key="4">
    <source>
        <dbReference type="SAM" id="MobiDB-lite"/>
    </source>
</evidence>
<evidence type="ECO:0000305" key="5"/>
<reference key="1">
    <citation type="journal article" date="2007" name="Proc. Natl. Acad. Sci. U.S.A.">
        <title>Genome sequencing and comparative analysis of Saccharomyces cerevisiae strain YJM789.</title>
        <authorList>
            <person name="Wei W."/>
            <person name="McCusker J.H."/>
            <person name="Hyman R.W."/>
            <person name="Jones T."/>
            <person name="Ning Y."/>
            <person name="Cao Z."/>
            <person name="Gu Z."/>
            <person name="Bruno D."/>
            <person name="Miranda M."/>
            <person name="Nguyen M."/>
            <person name="Wilhelmy J."/>
            <person name="Komp C."/>
            <person name="Tamse R."/>
            <person name="Wang X."/>
            <person name="Jia P."/>
            <person name="Luedi P."/>
            <person name="Oefner P.J."/>
            <person name="David L."/>
            <person name="Dietrich F.S."/>
            <person name="Li Y."/>
            <person name="Davis R.W."/>
            <person name="Steinmetz L.M."/>
        </authorList>
    </citation>
    <scope>NUCLEOTIDE SEQUENCE [LARGE SCALE GENOMIC DNA]</scope>
    <source>
        <strain>YJM789</strain>
    </source>
</reference>